<reference key="1">
    <citation type="journal article" date="2004" name="Nucleic Acids Res.">
        <title>Thermoadaptation trait revealed by the genome sequence of thermophilic Geobacillus kaustophilus.</title>
        <authorList>
            <person name="Takami H."/>
            <person name="Takaki Y."/>
            <person name="Chee G.-J."/>
            <person name="Nishi S."/>
            <person name="Shimamura S."/>
            <person name="Suzuki H."/>
            <person name="Matsui S."/>
            <person name="Uchiyama I."/>
        </authorList>
    </citation>
    <scope>NUCLEOTIDE SEQUENCE [LARGE SCALE GENOMIC DNA]</scope>
    <source>
        <strain>HTA426</strain>
    </source>
</reference>
<organism>
    <name type="scientific">Geobacillus kaustophilus (strain HTA426)</name>
    <dbReference type="NCBI Taxonomy" id="235909"/>
    <lineage>
        <taxon>Bacteria</taxon>
        <taxon>Bacillati</taxon>
        <taxon>Bacillota</taxon>
        <taxon>Bacilli</taxon>
        <taxon>Bacillales</taxon>
        <taxon>Anoxybacillaceae</taxon>
        <taxon>Geobacillus</taxon>
        <taxon>Geobacillus thermoleovorans group</taxon>
    </lineage>
</organism>
<keyword id="KW-0032">Aminotransferase</keyword>
<keyword id="KW-0963">Cytoplasm</keyword>
<keyword id="KW-0315">Glutamine amidotransferase</keyword>
<keyword id="KW-1185">Reference proteome</keyword>
<keyword id="KW-0677">Repeat</keyword>
<keyword id="KW-0808">Transferase</keyword>
<comment type="function">
    <text evidence="1">Catalyzes the first step in hexosamine metabolism, converting fructose-6P into glucosamine-6P using glutamine as a nitrogen source.</text>
</comment>
<comment type="catalytic activity">
    <reaction evidence="1">
        <text>D-fructose 6-phosphate + L-glutamine = D-glucosamine 6-phosphate + L-glutamate</text>
        <dbReference type="Rhea" id="RHEA:13237"/>
        <dbReference type="ChEBI" id="CHEBI:29985"/>
        <dbReference type="ChEBI" id="CHEBI:58359"/>
        <dbReference type="ChEBI" id="CHEBI:58725"/>
        <dbReference type="ChEBI" id="CHEBI:61527"/>
        <dbReference type="EC" id="2.6.1.16"/>
    </reaction>
</comment>
<comment type="subunit">
    <text evidence="1">Homodimer.</text>
</comment>
<comment type="subcellular location">
    <subcellularLocation>
        <location evidence="1">Cytoplasm</location>
    </subcellularLocation>
</comment>
<proteinExistence type="inferred from homology"/>
<evidence type="ECO:0000255" key="1">
    <source>
        <dbReference type="HAMAP-Rule" id="MF_00164"/>
    </source>
</evidence>
<accession>Q5L3P0</accession>
<name>GLMS_GEOKA</name>
<protein>
    <recommendedName>
        <fullName evidence="1">Glutamine--fructose-6-phosphate aminotransferase [isomerizing]</fullName>
        <ecNumber evidence="1">2.6.1.16</ecNumber>
    </recommendedName>
    <alternativeName>
        <fullName evidence="1">D-fructose-6-phosphate amidotransferase</fullName>
    </alternativeName>
    <alternativeName>
        <fullName evidence="1">GFAT</fullName>
    </alternativeName>
    <alternativeName>
        <fullName evidence="1">Glucosamine-6-phosphate synthase</fullName>
    </alternativeName>
    <alternativeName>
        <fullName evidence="1">Hexosephosphate aminotransferase</fullName>
    </alternativeName>
    <alternativeName>
        <fullName evidence="1">L-glutamine--D-fructose-6-phosphate amidotransferase</fullName>
    </alternativeName>
</protein>
<gene>
    <name evidence="1" type="primary">glmS</name>
    <name type="ordered locus">GK0155</name>
</gene>
<sequence>MCGIVGYIGYQDVKEILLRGLEKLEYRGYDSAGIAVLNESGVHVFKEKGRIADLRRIVDPNVNATVGIGHTRWATHGAPSRVNAHPHQSASGRFTLVHNGVIENYEMVKRDYLADVAFQSDTDTEVIVQLVEKFVRDGLTTEEAFRKTLSLLKGSYAIAMIDAQDENTIYAAKNKSPLLVGLGDGFNVVASDAMAMLQVTNQFVELMDGELVIVTSENVTIQTLNGETVKRKPFTAELDASDIEKGTYPHYMLKEIDEQPFVIRRIIQKYQDDNGELAIDKAIINEVLNADRLYIVACGTSYHAGLVGKQLIESWAKIPVEVHIASEFSYNMPLLSEKPLFIFISQSGETADSRAVLVQTNKLGYKAITITNVPGSTLSREADYTLLLHAGPEIAVASTKAYTAQIAVLAILAAAAAKAKGFELDFDLTKELAIVANVMEMLCDAKEEMEKIASDYLTLTRNCFFIGRAVDYYVCLEGALKLKEISYIQAEGFAGGELKHGTIALIEDGTPVIALATQEHVNLSIRGNVKEVVARGANPCVISMRGLEGDGDRFIIPAVHPDLTPLVSVVPLQLIAYYAALHRGCDVDKPRNLAKSVTVE</sequence>
<dbReference type="EC" id="2.6.1.16" evidence="1"/>
<dbReference type="EMBL" id="BA000043">
    <property type="protein sequence ID" value="BAD74440.1"/>
    <property type="molecule type" value="Genomic_DNA"/>
</dbReference>
<dbReference type="RefSeq" id="WP_011229667.1">
    <property type="nucleotide sequence ID" value="NC_006510.1"/>
</dbReference>
<dbReference type="SMR" id="Q5L3P0"/>
<dbReference type="STRING" id="235909.GK0155"/>
<dbReference type="KEGG" id="gka:GK0155"/>
<dbReference type="eggNOG" id="COG0449">
    <property type="taxonomic scope" value="Bacteria"/>
</dbReference>
<dbReference type="HOGENOM" id="CLU_012520_7_1_9"/>
<dbReference type="Proteomes" id="UP000001172">
    <property type="component" value="Chromosome"/>
</dbReference>
<dbReference type="GO" id="GO:0005829">
    <property type="term" value="C:cytosol"/>
    <property type="evidence" value="ECO:0007669"/>
    <property type="project" value="TreeGrafter"/>
</dbReference>
<dbReference type="GO" id="GO:0097367">
    <property type="term" value="F:carbohydrate derivative binding"/>
    <property type="evidence" value="ECO:0007669"/>
    <property type="project" value="InterPro"/>
</dbReference>
<dbReference type="GO" id="GO:0004360">
    <property type="term" value="F:glutamine-fructose-6-phosphate transaminase (isomerizing) activity"/>
    <property type="evidence" value="ECO:0007669"/>
    <property type="project" value="UniProtKB-UniRule"/>
</dbReference>
<dbReference type="GO" id="GO:0005975">
    <property type="term" value="P:carbohydrate metabolic process"/>
    <property type="evidence" value="ECO:0007669"/>
    <property type="project" value="UniProtKB-UniRule"/>
</dbReference>
<dbReference type="GO" id="GO:0006002">
    <property type="term" value="P:fructose 6-phosphate metabolic process"/>
    <property type="evidence" value="ECO:0007669"/>
    <property type="project" value="TreeGrafter"/>
</dbReference>
<dbReference type="GO" id="GO:0006487">
    <property type="term" value="P:protein N-linked glycosylation"/>
    <property type="evidence" value="ECO:0007669"/>
    <property type="project" value="TreeGrafter"/>
</dbReference>
<dbReference type="GO" id="GO:0006047">
    <property type="term" value="P:UDP-N-acetylglucosamine metabolic process"/>
    <property type="evidence" value="ECO:0007669"/>
    <property type="project" value="TreeGrafter"/>
</dbReference>
<dbReference type="CDD" id="cd00714">
    <property type="entry name" value="GFAT"/>
    <property type="match status" value="1"/>
</dbReference>
<dbReference type="CDD" id="cd05008">
    <property type="entry name" value="SIS_GlmS_GlmD_1"/>
    <property type="match status" value="1"/>
</dbReference>
<dbReference type="CDD" id="cd05009">
    <property type="entry name" value="SIS_GlmS_GlmD_2"/>
    <property type="match status" value="1"/>
</dbReference>
<dbReference type="FunFam" id="3.40.50.10490:FF:000001">
    <property type="entry name" value="Glutamine--fructose-6-phosphate aminotransferase [isomerizing]"/>
    <property type="match status" value="1"/>
</dbReference>
<dbReference type="FunFam" id="3.60.20.10:FF:000006">
    <property type="entry name" value="Glutamine--fructose-6-phosphate aminotransferase [isomerizing]"/>
    <property type="match status" value="1"/>
</dbReference>
<dbReference type="Gene3D" id="3.40.50.10490">
    <property type="entry name" value="Glucose-6-phosphate isomerase like protein, domain 1"/>
    <property type="match status" value="2"/>
</dbReference>
<dbReference type="Gene3D" id="3.60.20.10">
    <property type="entry name" value="Glutamine Phosphoribosylpyrophosphate, subunit 1, domain 1"/>
    <property type="match status" value="1"/>
</dbReference>
<dbReference type="HAMAP" id="MF_00164">
    <property type="entry name" value="GlmS"/>
    <property type="match status" value="1"/>
</dbReference>
<dbReference type="InterPro" id="IPR017932">
    <property type="entry name" value="GATase_2_dom"/>
</dbReference>
<dbReference type="InterPro" id="IPR005855">
    <property type="entry name" value="GFAT"/>
</dbReference>
<dbReference type="InterPro" id="IPR047084">
    <property type="entry name" value="GFAT_N"/>
</dbReference>
<dbReference type="InterPro" id="IPR035466">
    <property type="entry name" value="GlmS/AgaS_SIS"/>
</dbReference>
<dbReference type="InterPro" id="IPR035490">
    <property type="entry name" value="GlmS/FrlB_SIS"/>
</dbReference>
<dbReference type="InterPro" id="IPR029055">
    <property type="entry name" value="Ntn_hydrolases_N"/>
</dbReference>
<dbReference type="InterPro" id="IPR001347">
    <property type="entry name" value="SIS_dom"/>
</dbReference>
<dbReference type="InterPro" id="IPR046348">
    <property type="entry name" value="SIS_dom_sf"/>
</dbReference>
<dbReference type="NCBIfam" id="TIGR01135">
    <property type="entry name" value="glmS"/>
    <property type="match status" value="1"/>
</dbReference>
<dbReference type="NCBIfam" id="NF001484">
    <property type="entry name" value="PRK00331.1"/>
    <property type="match status" value="1"/>
</dbReference>
<dbReference type="PANTHER" id="PTHR10937">
    <property type="entry name" value="GLUCOSAMINE--FRUCTOSE-6-PHOSPHATE AMINOTRANSFERASE, ISOMERIZING"/>
    <property type="match status" value="1"/>
</dbReference>
<dbReference type="PANTHER" id="PTHR10937:SF0">
    <property type="entry name" value="GLUTAMINE--FRUCTOSE-6-PHOSPHATE TRANSAMINASE (ISOMERIZING)"/>
    <property type="match status" value="1"/>
</dbReference>
<dbReference type="Pfam" id="PF13522">
    <property type="entry name" value="GATase_6"/>
    <property type="match status" value="1"/>
</dbReference>
<dbReference type="Pfam" id="PF01380">
    <property type="entry name" value="SIS"/>
    <property type="match status" value="2"/>
</dbReference>
<dbReference type="SUPFAM" id="SSF56235">
    <property type="entry name" value="N-terminal nucleophile aminohydrolases (Ntn hydrolases)"/>
    <property type="match status" value="1"/>
</dbReference>
<dbReference type="SUPFAM" id="SSF53697">
    <property type="entry name" value="SIS domain"/>
    <property type="match status" value="1"/>
</dbReference>
<dbReference type="PROSITE" id="PS51278">
    <property type="entry name" value="GATASE_TYPE_2"/>
    <property type="match status" value="1"/>
</dbReference>
<dbReference type="PROSITE" id="PS51464">
    <property type="entry name" value="SIS"/>
    <property type="match status" value="2"/>
</dbReference>
<feature type="initiator methionine" description="Removed" evidence="1">
    <location>
        <position position="1"/>
    </location>
</feature>
<feature type="chain" id="PRO_0000135334" description="Glutamine--fructose-6-phosphate aminotransferase [isomerizing]">
    <location>
        <begin position="2"/>
        <end position="600"/>
    </location>
</feature>
<feature type="domain" description="Glutamine amidotransferase type-2" evidence="1">
    <location>
        <begin position="2"/>
        <end position="217"/>
    </location>
</feature>
<feature type="domain" description="SIS 1" evidence="1">
    <location>
        <begin position="283"/>
        <end position="422"/>
    </location>
</feature>
<feature type="domain" description="SIS 2" evidence="1">
    <location>
        <begin position="452"/>
        <end position="590"/>
    </location>
</feature>
<feature type="active site" description="Nucleophile; for GATase activity" evidence="1">
    <location>
        <position position="2"/>
    </location>
</feature>
<feature type="active site" description="For Fru-6P isomerization activity" evidence="1">
    <location>
        <position position="595"/>
    </location>
</feature>